<proteinExistence type="evidence at protein level"/>
<sequence length="515" mass="57047">MARMGLAGAAGRWWGLALGLTAFFLPGAHTQVVQVNDSMYGFIGTDVVLHCSFANPLPGVKITQVTWQKATNGSKQNVAIYNPAMGVSVLAPYRERVEFLRPSFTDGTIRLSRLELEDEGVYICEFATFPAGNRESQLNLTVMAKPTNWIEGTQAVLRAKKGKDDKVLVATCTSANGKPPSVVSWETHLKGEAEYQEIRNPNGTVTVISRYRLVPSREDHRQSLACIVNYHMDRFRESLTLNVQYEPEVTIEGFDGNWYLQRMDVKLTCKADANPPATEYHWTTLNGSLPKGVEAQNRTLFFRGPINYSMAGTYICEATNPIGTRSGQVEVNITEFPYTPSPPEHGRRAGQVPTAIIGGVVGSILLVLFVVGGIVVALCRRRHTFKGDYSTKKHVYGNGYSKAGIPQHHPPMAQNLQYPEDSDDEKKAGPLGGSSYEEEEEEEGGGGERKVGGPHPKYDEDAKRPYFTVDEAEARQDGYGDRTLGYQYDPEQLDLAENMVSQNDGSFISKKEWYV</sequence>
<protein>
    <recommendedName>
        <fullName evidence="7">Nectin-1</fullName>
    </recommendedName>
    <alternativeName>
        <fullName>Herpes virus entry mediator C</fullName>
        <shortName>Herpesvirus entry mediator C</shortName>
        <shortName>HveC</shortName>
    </alternativeName>
    <alternativeName>
        <fullName evidence="1">Nectin cell adhesion molecule 1</fullName>
    </alternativeName>
    <alternativeName>
        <fullName>Poliovirus receptor-related protein 1</fullName>
    </alternativeName>
    <cdAntigenName>CD111</cdAntigenName>
</protein>
<name>NECT1_PIG</name>
<evidence type="ECO:0000250" key="1">
    <source>
        <dbReference type="UniProtKB" id="Q15223"/>
    </source>
</evidence>
<evidence type="ECO:0000250" key="2">
    <source>
        <dbReference type="UniProtKB" id="Q9JKF6"/>
    </source>
</evidence>
<evidence type="ECO:0000255" key="3"/>
<evidence type="ECO:0000255" key="4">
    <source>
        <dbReference type="PROSITE-ProRule" id="PRU00114"/>
    </source>
</evidence>
<evidence type="ECO:0000256" key="5">
    <source>
        <dbReference type="SAM" id="MobiDB-lite"/>
    </source>
</evidence>
<evidence type="ECO:0000269" key="6">
    <source>
    </source>
</evidence>
<evidence type="ECO:0000303" key="7">
    <source>
    </source>
</evidence>
<evidence type="ECO:0000305" key="8"/>
<evidence type="ECO:0007744" key="9">
    <source>
        <dbReference type="PDB" id="5X5W"/>
    </source>
</evidence>
<evidence type="ECO:0007829" key="10">
    <source>
        <dbReference type="PDB" id="5X5W"/>
    </source>
</evidence>
<feature type="signal peptide" evidence="3">
    <location>
        <begin position="1"/>
        <end position="30"/>
    </location>
</feature>
<feature type="chain" id="PRO_0000015135" description="Nectin-1">
    <location>
        <begin position="31"/>
        <end position="515"/>
    </location>
</feature>
<feature type="topological domain" description="Extracellular" evidence="3">
    <location>
        <begin position="31"/>
        <end position="355"/>
    </location>
</feature>
<feature type="transmembrane region" description="Helical" evidence="3">
    <location>
        <begin position="356"/>
        <end position="376"/>
    </location>
</feature>
<feature type="topological domain" description="Cytoplasmic" evidence="3">
    <location>
        <begin position="377"/>
        <end position="515"/>
    </location>
</feature>
<feature type="domain" description="Ig-like V-type">
    <location>
        <begin position="31"/>
        <end position="141"/>
    </location>
</feature>
<feature type="domain" description="Ig-like C2-type 1">
    <location>
        <begin position="145"/>
        <end position="243"/>
    </location>
</feature>
<feature type="domain" description="Ig-like C2-type 2">
    <location>
        <begin position="247"/>
        <end position="334"/>
    </location>
</feature>
<feature type="region of interest" description="Interaction with FGFR" evidence="2">
    <location>
        <begin position="282"/>
        <end position="299"/>
    </location>
</feature>
<feature type="region of interest" description="Disordered" evidence="5">
    <location>
        <begin position="400"/>
        <end position="486"/>
    </location>
</feature>
<feature type="compositionally biased region" description="Acidic residues" evidence="5">
    <location>
        <begin position="436"/>
        <end position="445"/>
    </location>
</feature>
<feature type="compositionally biased region" description="Basic and acidic residues" evidence="5">
    <location>
        <begin position="446"/>
        <end position="464"/>
    </location>
</feature>
<feature type="modified residue" description="Phosphoserine" evidence="1">
    <location>
        <position position="422"/>
    </location>
</feature>
<feature type="modified residue" description="Phosphoserine" evidence="1">
    <location>
        <position position="434"/>
    </location>
</feature>
<feature type="modified residue" description="Phosphoserine" evidence="2">
    <location>
        <position position="435"/>
    </location>
</feature>
<feature type="modified residue" description="Phosphotyrosine" evidence="2">
    <location>
        <position position="436"/>
    </location>
</feature>
<feature type="modified residue" description="Phosphoserine" evidence="2">
    <location>
        <position position="509"/>
    </location>
</feature>
<feature type="glycosylation site" description="N-linked (GlcNAc...) asparagine" evidence="3">
    <location>
        <position position="36"/>
    </location>
</feature>
<feature type="glycosylation site" description="N-linked (GlcNAc...) asparagine" evidence="3">
    <location>
        <position position="72"/>
    </location>
</feature>
<feature type="glycosylation site" description="N-linked (GlcNAc...) asparagine" evidence="3">
    <location>
        <position position="139"/>
    </location>
</feature>
<feature type="glycosylation site" description="N-linked (GlcNAc...) asparagine" evidence="3">
    <location>
        <position position="202"/>
    </location>
</feature>
<feature type="glycosylation site" description="N-linked (GlcNAc...) asparagine" evidence="3">
    <location>
        <position position="286"/>
    </location>
</feature>
<feature type="glycosylation site" description="N-linked (GlcNAc...) asparagine" evidence="3">
    <location>
        <position position="297"/>
    </location>
</feature>
<feature type="glycosylation site" description="N-linked (GlcNAc...) asparagine" evidence="3">
    <location>
        <position position="307"/>
    </location>
</feature>
<feature type="glycosylation site" description="N-linked (GlcNAc...) asparagine" evidence="3">
    <location>
        <position position="332"/>
    </location>
</feature>
<feature type="disulfide bond" evidence="4 6 9">
    <location>
        <begin position="51"/>
        <end position="124"/>
    </location>
</feature>
<feature type="disulfide bond" evidence="4">
    <location>
        <begin position="172"/>
        <end position="226"/>
    </location>
</feature>
<feature type="disulfide bond" evidence="4">
    <location>
        <begin position="269"/>
        <end position="316"/>
    </location>
</feature>
<feature type="strand" evidence="10">
    <location>
        <begin position="38"/>
        <end position="41"/>
    </location>
</feature>
<feature type="strand" evidence="10">
    <location>
        <begin position="45"/>
        <end position="49"/>
    </location>
</feature>
<feature type="strand" evidence="10">
    <location>
        <begin position="61"/>
        <end position="71"/>
    </location>
</feature>
<feature type="strand" evidence="10">
    <location>
        <begin position="74"/>
        <end position="82"/>
    </location>
</feature>
<feature type="turn" evidence="10">
    <location>
        <begin position="83"/>
        <end position="85"/>
    </location>
</feature>
<feature type="strand" evidence="10">
    <location>
        <begin position="86"/>
        <end position="89"/>
    </location>
</feature>
<feature type="turn" evidence="10">
    <location>
        <begin position="94"/>
        <end position="96"/>
    </location>
</feature>
<feature type="strand" evidence="10">
    <location>
        <begin position="97"/>
        <end position="101"/>
    </location>
</feature>
<feature type="turn" evidence="10">
    <location>
        <begin position="104"/>
        <end position="106"/>
    </location>
</feature>
<feature type="strand" evidence="10">
    <location>
        <begin position="109"/>
        <end position="113"/>
    </location>
</feature>
<feature type="helix" evidence="10">
    <location>
        <begin position="116"/>
        <end position="118"/>
    </location>
</feature>
<feature type="strand" evidence="10">
    <location>
        <begin position="120"/>
        <end position="129"/>
    </location>
</feature>
<feature type="strand" evidence="10">
    <location>
        <begin position="132"/>
        <end position="142"/>
    </location>
</feature>
<dbReference type="EMBL" id="AF308632">
    <property type="protein sequence ID" value="AAG30281.1"/>
    <property type="molecule type" value="mRNA"/>
</dbReference>
<dbReference type="RefSeq" id="NP_001001262.1">
    <property type="nucleotide sequence ID" value="NM_001001262.1"/>
</dbReference>
<dbReference type="RefSeq" id="XP_003130000.5">
    <property type="nucleotide sequence ID" value="XM_003129952.5"/>
</dbReference>
<dbReference type="PDB" id="5X5W">
    <property type="method" value="X-ray"/>
    <property type="resolution" value="2.70 A"/>
    <property type="chains" value="B/D=37-143"/>
</dbReference>
<dbReference type="PDBsum" id="5X5W"/>
<dbReference type="SMR" id="Q9GL76"/>
<dbReference type="FunCoup" id="Q9GL76">
    <property type="interactions" value="550"/>
</dbReference>
<dbReference type="IntAct" id="Q9GL76">
    <property type="interactions" value="2"/>
</dbReference>
<dbReference type="STRING" id="9823.ENSSSCP00000016048"/>
<dbReference type="GlyCosmos" id="Q9GL76">
    <property type="glycosylation" value="8 sites, No reported glycans"/>
</dbReference>
<dbReference type="GlyGen" id="Q9GL76">
    <property type="glycosylation" value="8 sites"/>
</dbReference>
<dbReference type="PaxDb" id="9823-ENSSSCP00000016047"/>
<dbReference type="PeptideAtlas" id="Q9GL76"/>
<dbReference type="Ensembl" id="ENSSSCT00105007046">
    <property type="protein sequence ID" value="ENSSSCP00105005082"/>
    <property type="gene ID" value="ENSSSCG00105003620"/>
</dbReference>
<dbReference type="GeneID" id="397247"/>
<dbReference type="KEGG" id="ssc:397247"/>
<dbReference type="CTD" id="5818"/>
<dbReference type="eggNOG" id="ENOG502QVRJ">
    <property type="taxonomic scope" value="Eukaryota"/>
</dbReference>
<dbReference type="InParanoid" id="Q9GL76"/>
<dbReference type="OrthoDB" id="8718740at2759"/>
<dbReference type="Proteomes" id="UP000008227">
    <property type="component" value="Unplaced"/>
</dbReference>
<dbReference type="Proteomes" id="UP000314985">
    <property type="component" value="Unplaced"/>
</dbReference>
<dbReference type="Proteomes" id="UP000694570">
    <property type="component" value="Unplaced"/>
</dbReference>
<dbReference type="Proteomes" id="UP000694571">
    <property type="component" value="Unplaced"/>
</dbReference>
<dbReference type="Proteomes" id="UP000694720">
    <property type="component" value="Unplaced"/>
</dbReference>
<dbReference type="Proteomes" id="UP000694722">
    <property type="component" value="Unplaced"/>
</dbReference>
<dbReference type="Proteomes" id="UP000694723">
    <property type="component" value="Unplaced"/>
</dbReference>
<dbReference type="Proteomes" id="UP000694724">
    <property type="component" value="Unplaced"/>
</dbReference>
<dbReference type="Proteomes" id="UP000694725">
    <property type="component" value="Unplaced"/>
</dbReference>
<dbReference type="Proteomes" id="UP000694726">
    <property type="component" value="Unplaced"/>
</dbReference>
<dbReference type="Proteomes" id="UP000694727">
    <property type="component" value="Unplaced"/>
</dbReference>
<dbReference type="Proteomes" id="UP000694728">
    <property type="component" value="Unplaced"/>
</dbReference>
<dbReference type="GO" id="GO:0005912">
    <property type="term" value="C:adherens junction"/>
    <property type="evidence" value="ECO:0000318"/>
    <property type="project" value="GO_Central"/>
</dbReference>
<dbReference type="GO" id="GO:0042995">
    <property type="term" value="C:cell projection"/>
    <property type="evidence" value="ECO:0007669"/>
    <property type="project" value="UniProtKB-KW"/>
</dbReference>
<dbReference type="GO" id="GO:0005886">
    <property type="term" value="C:plasma membrane"/>
    <property type="evidence" value="ECO:0000250"/>
    <property type="project" value="UniProtKB"/>
</dbReference>
<dbReference type="GO" id="GO:0042734">
    <property type="term" value="C:presynaptic membrane"/>
    <property type="evidence" value="ECO:0007669"/>
    <property type="project" value="UniProtKB-SubCell"/>
</dbReference>
<dbReference type="GO" id="GO:0098631">
    <property type="term" value="F:cell adhesion mediator activity"/>
    <property type="evidence" value="ECO:0000250"/>
    <property type="project" value="UniProtKB"/>
</dbReference>
<dbReference type="GO" id="GO:0001618">
    <property type="term" value="F:virus receptor activity"/>
    <property type="evidence" value="ECO:0000314"/>
    <property type="project" value="UniProtKB"/>
</dbReference>
<dbReference type="GO" id="GO:0090103">
    <property type="term" value="P:cochlea morphogenesis"/>
    <property type="evidence" value="ECO:0000250"/>
    <property type="project" value="UniProtKB"/>
</dbReference>
<dbReference type="GO" id="GO:0007157">
    <property type="term" value="P:heterophilic cell-cell adhesion via plasma membrane cell adhesion molecules"/>
    <property type="evidence" value="ECO:0000250"/>
    <property type="project" value="UniProtKB"/>
</dbReference>
<dbReference type="GO" id="GO:0007156">
    <property type="term" value="P:homophilic cell adhesion via plasma membrane adhesion molecules"/>
    <property type="evidence" value="ECO:0000250"/>
    <property type="project" value="UniProtKB"/>
</dbReference>
<dbReference type="GO" id="GO:0046598">
    <property type="term" value="P:positive regulation of viral entry into host cell"/>
    <property type="evidence" value="ECO:0000315"/>
    <property type="project" value="AgBase"/>
</dbReference>
<dbReference type="GO" id="GO:1902414">
    <property type="term" value="P:protein localization to cell junction"/>
    <property type="evidence" value="ECO:0000318"/>
    <property type="project" value="GO_Central"/>
</dbReference>
<dbReference type="CDD" id="cd05890">
    <property type="entry name" value="IgC1_2_Nectin-1_like"/>
    <property type="match status" value="1"/>
</dbReference>
<dbReference type="CDD" id="cd05886">
    <property type="entry name" value="IgV_1_Nectin-1_like"/>
    <property type="match status" value="1"/>
</dbReference>
<dbReference type="CDD" id="cd12087">
    <property type="entry name" value="TM_EGFR-like"/>
    <property type="match status" value="1"/>
</dbReference>
<dbReference type="FunFam" id="2.60.40.10:FF:000268">
    <property type="entry name" value="Nectin cell adhesion molecule 1"/>
    <property type="match status" value="1"/>
</dbReference>
<dbReference type="FunFam" id="2.60.40.10:FF:000304">
    <property type="entry name" value="Nectin cell adhesion molecule 1"/>
    <property type="match status" value="1"/>
</dbReference>
<dbReference type="FunFam" id="2.60.40.10:FF:000427">
    <property type="entry name" value="Nectin cell adhesion molecule 1"/>
    <property type="match status" value="1"/>
</dbReference>
<dbReference type="Gene3D" id="2.60.40.10">
    <property type="entry name" value="Immunoglobulins"/>
    <property type="match status" value="3"/>
</dbReference>
<dbReference type="InterPro" id="IPR013162">
    <property type="entry name" value="CD80_C2-set"/>
</dbReference>
<dbReference type="InterPro" id="IPR007110">
    <property type="entry name" value="Ig-like_dom"/>
</dbReference>
<dbReference type="InterPro" id="IPR036179">
    <property type="entry name" value="Ig-like_dom_sf"/>
</dbReference>
<dbReference type="InterPro" id="IPR013783">
    <property type="entry name" value="Ig-like_fold"/>
</dbReference>
<dbReference type="InterPro" id="IPR003599">
    <property type="entry name" value="Ig_sub"/>
</dbReference>
<dbReference type="InterPro" id="IPR003598">
    <property type="entry name" value="Ig_sub2"/>
</dbReference>
<dbReference type="InterPro" id="IPR013106">
    <property type="entry name" value="Ig_V-set"/>
</dbReference>
<dbReference type="InterPro" id="IPR041850">
    <property type="entry name" value="Nectin-1_Ig2"/>
</dbReference>
<dbReference type="InterPro" id="IPR041849">
    <property type="entry name" value="Nectin-1_IgV1"/>
</dbReference>
<dbReference type="InterPro" id="IPR051427">
    <property type="entry name" value="Nectin/Nectin-like"/>
</dbReference>
<dbReference type="PANTHER" id="PTHR23277:SF69">
    <property type="entry name" value="NECTIN-1"/>
    <property type="match status" value="1"/>
</dbReference>
<dbReference type="PANTHER" id="PTHR23277">
    <property type="entry name" value="NECTIN-RELATED"/>
    <property type="match status" value="1"/>
</dbReference>
<dbReference type="Pfam" id="PF08205">
    <property type="entry name" value="C2-set_2"/>
    <property type="match status" value="1"/>
</dbReference>
<dbReference type="Pfam" id="PF13927">
    <property type="entry name" value="Ig_3"/>
    <property type="match status" value="1"/>
</dbReference>
<dbReference type="Pfam" id="PF07686">
    <property type="entry name" value="V-set"/>
    <property type="match status" value="1"/>
</dbReference>
<dbReference type="SMART" id="SM00409">
    <property type="entry name" value="IG"/>
    <property type="match status" value="3"/>
</dbReference>
<dbReference type="SMART" id="SM00408">
    <property type="entry name" value="IGc2"/>
    <property type="match status" value="2"/>
</dbReference>
<dbReference type="SMART" id="SM00406">
    <property type="entry name" value="IGv"/>
    <property type="match status" value="1"/>
</dbReference>
<dbReference type="SUPFAM" id="SSF48726">
    <property type="entry name" value="Immunoglobulin"/>
    <property type="match status" value="3"/>
</dbReference>
<dbReference type="PROSITE" id="PS50835">
    <property type="entry name" value="IG_LIKE"/>
    <property type="match status" value="2"/>
</dbReference>
<accession>Q9GL76</accession>
<reference key="1">
    <citation type="journal article" date="2001" name="Virology">
        <title>Porcine HveC, a member of the highly conserved HveC/nectin 1 family, is a functional alphaherpesvirus receptor.</title>
        <authorList>
            <person name="Milne R.S.B."/>
            <person name="Connolly S.A."/>
            <person name="Krummenacher C."/>
            <person name="Eisenberg R.J."/>
            <person name="Cohen G.H."/>
        </authorList>
    </citation>
    <scope>NUCLEOTIDE SEQUENCE [MRNA]</scope>
</reference>
<reference evidence="9" key="2">
    <citation type="journal article" date="2017" name="PLoS Pathog.">
        <title>Structural basis of nectin-1 recognition by pseudorabies virus glycoprotein D.</title>
        <authorList>
            <person name="Li A."/>
            <person name="Lu G."/>
            <person name="Qi J."/>
            <person name="Wu L."/>
            <person name="Tian K."/>
            <person name="Luo T."/>
            <person name="Shi Y."/>
            <person name="Yan J."/>
            <person name="Gao G.F."/>
        </authorList>
    </citation>
    <scope>X-RAY CRYSTALLOGRAPHY (2.70 ANGSTROMS) OF 37-143 IN COMPLEX WITH PSEUDORABIES VIRUS PROTEIN GLYCOPROTEIN D</scope>
    <scope>FUNCTION (MICROBIAL INFECTION)</scope>
    <scope>INTERACTION WITH PSEUDORABIES VIRUS PROTEIN GLYCOPROTEIN D (MICROBIAL INFECTION)</scope>
    <scope>DISULFIDE BOND</scope>
</reference>
<comment type="function">
    <text evidence="6">(Microbial infection) Acts as a receptor for herpes simplex virus 1/HHV-1, herpes simplex virus 2/HHV-2, and pseudorabies virus/PRV.</text>
</comment>
<comment type="subunit">
    <text evidence="6">(Microbial infection) Interacts with herpes pseudorabies virus/PRV envelope glycoprotein D.</text>
</comment>
<comment type="interaction">
    <interactant intactId="EBI-11691211">
        <id>Q9GL76</id>
    </interactant>
    <interactant intactId="EBI-11691180">
        <id>Q69091</id>
        <label>gD</label>
    </interactant>
    <organismsDiffer>true</organismsDiffer>
    <experiments>4</experiments>
</comment>
<comment type="interaction">
    <interactant intactId="EBI-11691211">
        <id>Q9GL76</id>
    </interactant>
    <interactant intactId="EBI-11691167">
        <id>G3G922</id>
        <label>US6</label>
    </interactant>
    <organismsDiffer>true</organismsDiffer>
    <experiments>4</experiments>
</comment>
<comment type="subcellular location">
    <subcellularLocation>
        <location evidence="1">Cell membrane</location>
        <topology evidence="3">Single-pass type I membrane protein</topology>
    </subcellularLocation>
    <subcellularLocation>
        <location evidence="1">Cell junction</location>
        <location evidence="1">Adherens junction</location>
    </subcellularLocation>
    <subcellularLocation>
        <location evidence="2">Presynaptic cell membrane</location>
        <topology evidence="1">Single-pass type I membrane protein</topology>
    </subcellularLocation>
    <text evidence="2">In the auditory epithelium, specificaly localizes to the apical side of the lateral membranes of hair cells.</text>
</comment>
<comment type="domain">
    <text evidence="1 2">The Ig-like V-type domain is involved in homophilic interaction in cis, a prerequisite for cell adhesion (By similarity). Ig-like C2-type 2 mediates neurite outgrowth through binding, induction of phosphorylation, and activation of FGFR (By similarity).</text>
</comment>
<comment type="similarity">
    <text evidence="8">Belongs to the nectin family.</text>
</comment>
<keyword id="KW-0002">3D-structure</keyword>
<keyword id="KW-0130">Cell adhesion</keyword>
<keyword id="KW-0965">Cell junction</keyword>
<keyword id="KW-1003">Cell membrane</keyword>
<keyword id="KW-0966">Cell projection</keyword>
<keyword id="KW-1015">Disulfide bond</keyword>
<keyword id="KW-0325">Glycoprotein</keyword>
<keyword id="KW-1183">Host cell receptor for virus entry</keyword>
<keyword id="KW-0945">Host-virus interaction</keyword>
<keyword id="KW-0393">Immunoglobulin domain</keyword>
<keyword id="KW-0472">Membrane</keyword>
<keyword id="KW-0597">Phosphoprotein</keyword>
<keyword id="KW-0675">Receptor</keyword>
<keyword id="KW-1185">Reference proteome</keyword>
<keyword id="KW-0677">Repeat</keyword>
<keyword id="KW-0732">Signal</keyword>
<keyword id="KW-0770">Synapse</keyword>
<keyword id="KW-0812">Transmembrane</keyword>
<keyword id="KW-1133">Transmembrane helix</keyword>
<gene>
    <name evidence="7" type="primary">NECTIN1</name>
    <name type="synonym">HVEC</name>
    <name type="synonym">PRR1</name>
    <name type="synonym">PVRL1</name>
</gene>
<organism>
    <name type="scientific">Sus scrofa</name>
    <name type="common">Pig</name>
    <dbReference type="NCBI Taxonomy" id="9823"/>
    <lineage>
        <taxon>Eukaryota</taxon>
        <taxon>Metazoa</taxon>
        <taxon>Chordata</taxon>
        <taxon>Craniata</taxon>
        <taxon>Vertebrata</taxon>
        <taxon>Euteleostomi</taxon>
        <taxon>Mammalia</taxon>
        <taxon>Eutheria</taxon>
        <taxon>Laurasiatheria</taxon>
        <taxon>Artiodactyla</taxon>
        <taxon>Suina</taxon>
        <taxon>Suidae</taxon>
        <taxon>Sus</taxon>
    </lineage>
</organism>